<dbReference type="EC" id="2.7.7.6" evidence="1"/>
<dbReference type="EMBL" id="AE008384">
    <property type="protein sequence ID" value="AAM31854.1"/>
    <property type="molecule type" value="Genomic_DNA"/>
</dbReference>
<dbReference type="RefSeq" id="WP_011034089.1">
    <property type="nucleotide sequence ID" value="NC_003901.1"/>
</dbReference>
<dbReference type="SMR" id="Q8PV16"/>
<dbReference type="KEGG" id="mma:MM_2158"/>
<dbReference type="PATRIC" id="fig|192952.21.peg.2475"/>
<dbReference type="eggNOG" id="arCOG04241">
    <property type="taxonomic scope" value="Archaea"/>
</dbReference>
<dbReference type="HOGENOM" id="CLU_038421_3_1_2"/>
<dbReference type="Proteomes" id="UP000000595">
    <property type="component" value="Chromosome"/>
</dbReference>
<dbReference type="GO" id="GO:0005737">
    <property type="term" value="C:cytoplasm"/>
    <property type="evidence" value="ECO:0007669"/>
    <property type="project" value="UniProtKB-SubCell"/>
</dbReference>
<dbReference type="GO" id="GO:0000428">
    <property type="term" value="C:DNA-directed RNA polymerase complex"/>
    <property type="evidence" value="ECO:0007669"/>
    <property type="project" value="UniProtKB-KW"/>
</dbReference>
<dbReference type="GO" id="GO:0051538">
    <property type="term" value="F:3 iron, 4 sulfur cluster binding"/>
    <property type="evidence" value="ECO:0007669"/>
    <property type="project" value="UniProtKB-KW"/>
</dbReference>
<dbReference type="GO" id="GO:0003677">
    <property type="term" value="F:DNA binding"/>
    <property type="evidence" value="ECO:0007669"/>
    <property type="project" value="UniProtKB-UniRule"/>
</dbReference>
<dbReference type="GO" id="GO:0003899">
    <property type="term" value="F:DNA-directed RNA polymerase activity"/>
    <property type="evidence" value="ECO:0007669"/>
    <property type="project" value="UniProtKB-UniRule"/>
</dbReference>
<dbReference type="GO" id="GO:0046872">
    <property type="term" value="F:metal ion binding"/>
    <property type="evidence" value="ECO:0007669"/>
    <property type="project" value="UniProtKB-KW"/>
</dbReference>
<dbReference type="GO" id="GO:0046983">
    <property type="term" value="F:protein dimerization activity"/>
    <property type="evidence" value="ECO:0007669"/>
    <property type="project" value="InterPro"/>
</dbReference>
<dbReference type="GO" id="GO:0006351">
    <property type="term" value="P:DNA-templated transcription"/>
    <property type="evidence" value="ECO:0007669"/>
    <property type="project" value="UniProtKB-UniRule"/>
</dbReference>
<dbReference type="CDD" id="cd07030">
    <property type="entry name" value="RNAP_D"/>
    <property type="match status" value="1"/>
</dbReference>
<dbReference type="Gene3D" id="3.30.70.3110">
    <property type="match status" value="1"/>
</dbReference>
<dbReference type="Gene3D" id="2.170.120.12">
    <property type="entry name" value="DNA-directed RNA polymerase, insert domain"/>
    <property type="match status" value="1"/>
</dbReference>
<dbReference type="Gene3D" id="3.30.1360.10">
    <property type="entry name" value="RNA polymerase, RBP11-like subunit"/>
    <property type="match status" value="1"/>
</dbReference>
<dbReference type="HAMAP" id="MF_00320">
    <property type="entry name" value="RNApol_arch_Rpo3"/>
    <property type="match status" value="1"/>
</dbReference>
<dbReference type="InterPro" id="IPR017896">
    <property type="entry name" value="4Fe4S_Fe-S-bd"/>
</dbReference>
<dbReference type="InterPro" id="IPR001514">
    <property type="entry name" value="DNA-dir_RNA_pol_30-40kDasu_CS"/>
</dbReference>
<dbReference type="InterPro" id="IPR011262">
    <property type="entry name" value="DNA-dir_RNA_pol_insert"/>
</dbReference>
<dbReference type="InterPro" id="IPR011263">
    <property type="entry name" value="DNA-dir_RNA_pol_RpoA/D/Rpb3"/>
</dbReference>
<dbReference type="InterPro" id="IPR036603">
    <property type="entry name" value="RBP11-like"/>
</dbReference>
<dbReference type="InterPro" id="IPR022842">
    <property type="entry name" value="RNAP_Rpo3/Rpb3/RPAC1"/>
</dbReference>
<dbReference type="InterPro" id="IPR036643">
    <property type="entry name" value="RNApol_insert_sf"/>
</dbReference>
<dbReference type="InterPro" id="IPR050518">
    <property type="entry name" value="Rpo3/RPB3_RNA_Pol_subunit"/>
</dbReference>
<dbReference type="NCBIfam" id="NF001988">
    <property type="entry name" value="PRK00783.1"/>
    <property type="match status" value="1"/>
</dbReference>
<dbReference type="PANTHER" id="PTHR11800">
    <property type="entry name" value="DNA-DIRECTED RNA POLYMERASE"/>
    <property type="match status" value="1"/>
</dbReference>
<dbReference type="PANTHER" id="PTHR11800:SF2">
    <property type="entry name" value="DNA-DIRECTED RNA POLYMERASE II SUBUNIT RPB3"/>
    <property type="match status" value="1"/>
</dbReference>
<dbReference type="Pfam" id="PF01000">
    <property type="entry name" value="RNA_pol_A_bac"/>
    <property type="match status" value="1"/>
</dbReference>
<dbReference type="Pfam" id="PF01193">
    <property type="entry name" value="RNA_pol_L"/>
    <property type="match status" value="1"/>
</dbReference>
<dbReference type="SMART" id="SM00662">
    <property type="entry name" value="RPOLD"/>
    <property type="match status" value="1"/>
</dbReference>
<dbReference type="SUPFAM" id="SSF56553">
    <property type="entry name" value="Insert subdomain of RNA polymerase alpha subunit"/>
    <property type="match status" value="1"/>
</dbReference>
<dbReference type="SUPFAM" id="SSF55257">
    <property type="entry name" value="RBP11-like subunits of RNA polymerase"/>
    <property type="match status" value="1"/>
</dbReference>
<dbReference type="PROSITE" id="PS00198">
    <property type="entry name" value="4FE4S_FER_1"/>
    <property type="match status" value="1"/>
</dbReference>
<dbReference type="PROSITE" id="PS51379">
    <property type="entry name" value="4FE4S_FER_2"/>
    <property type="match status" value="2"/>
</dbReference>
<dbReference type="PROSITE" id="PS00446">
    <property type="entry name" value="RNA_POL_D_30KD"/>
    <property type="match status" value="1"/>
</dbReference>
<name>RPO3_METMA</name>
<proteinExistence type="inferred from homology"/>
<feature type="chain" id="PRO_0000132756" description="DNA-directed RNA polymerase subunit Rpo3">
    <location>
        <begin position="1"/>
        <end position="266"/>
    </location>
</feature>
<feature type="binding site" evidence="1">
    <location>
        <position position="205"/>
    </location>
    <ligand>
        <name>[3Fe-4S] cluster</name>
        <dbReference type="ChEBI" id="CHEBI:21137"/>
    </ligand>
</feature>
<feature type="binding site" evidence="1">
    <location>
        <position position="208"/>
    </location>
    <ligand>
        <name>[3Fe-4S] cluster</name>
        <dbReference type="ChEBI" id="CHEBI:21137"/>
    </ligand>
</feature>
<feature type="binding site" evidence="1">
    <location>
        <position position="211"/>
    </location>
    <ligand>
        <name>[3Fe-4S] cluster</name>
        <dbReference type="ChEBI" id="CHEBI:21137"/>
    </ligand>
</feature>
<comment type="function">
    <text evidence="1">DNA-dependent RNA polymerase (RNAP) catalyzes the transcription of DNA into RNA using the four ribonucleoside triphosphates as substrates.</text>
</comment>
<comment type="catalytic activity">
    <reaction evidence="1">
        <text>RNA(n) + a ribonucleoside 5'-triphosphate = RNA(n+1) + diphosphate</text>
        <dbReference type="Rhea" id="RHEA:21248"/>
        <dbReference type="Rhea" id="RHEA-COMP:14527"/>
        <dbReference type="Rhea" id="RHEA-COMP:17342"/>
        <dbReference type="ChEBI" id="CHEBI:33019"/>
        <dbReference type="ChEBI" id="CHEBI:61557"/>
        <dbReference type="ChEBI" id="CHEBI:140395"/>
        <dbReference type="EC" id="2.7.7.6"/>
    </reaction>
</comment>
<comment type="cofactor">
    <cofactor evidence="1">
        <name>[3Fe-4S] cluster</name>
        <dbReference type="ChEBI" id="CHEBI:21137"/>
    </cofactor>
    <text evidence="1">Binds 1 [3Fe-4S] cluster.</text>
</comment>
<comment type="subunit">
    <text evidence="1">Part of the RNA polymerase complex.</text>
</comment>
<comment type="subcellular location">
    <subcellularLocation>
        <location evidence="1">Cytoplasm</location>
    </subcellularLocation>
</comment>
<comment type="similarity">
    <text evidence="1">Belongs to the archaeal Rpo3/eukaryotic RPB3 RNA polymerase subunit family.</text>
</comment>
<comment type="caution">
    <text evidence="2">X-ray crystallography in other archaea shows this protein binds a 3Fe-4S cluster, although a 4Fe-4S cluster has been suggested to be present in this protein.</text>
</comment>
<reference key="1">
    <citation type="journal article" date="2002" name="J. Mol. Microbiol. Biotechnol.">
        <title>The genome of Methanosarcina mazei: evidence for lateral gene transfer between Bacteria and Archaea.</title>
        <authorList>
            <person name="Deppenmeier U."/>
            <person name="Johann A."/>
            <person name="Hartsch T."/>
            <person name="Merkl R."/>
            <person name="Schmitz R.A."/>
            <person name="Martinez-Arias R."/>
            <person name="Henne A."/>
            <person name="Wiezer A."/>
            <person name="Baeumer S."/>
            <person name="Jacobi C."/>
            <person name="Brueggemann H."/>
            <person name="Lienard T."/>
            <person name="Christmann A."/>
            <person name="Boemecke M."/>
            <person name="Steckel S."/>
            <person name="Bhattacharyya A."/>
            <person name="Lykidis A."/>
            <person name="Overbeek R."/>
            <person name="Klenk H.-P."/>
            <person name="Gunsalus R.P."/>
            <person name="Fritz H.-J."/>
            <person name="Gottschalk G."/>
        </authorList>
    </citation>
    <scope>NUCLEOTIDE SEQUENCE [LARGE SCALE GENOMIC DNA]</scope>
    <source>
        <strain>ATCC BAA-159 / DSM 3647 / Goe1 / Go1 / JCM 11833 / OCM 88</strain>
    </source>
</reference>
<organism>
    <name type="scientific">Methanosarcina mazei (strain ATCC BAA-159 / DSM 3647 / Goe1 / Go1 / JCM 11833 / OCM 88)</name>
    <name type="common">Methanosarcina frisia</name>
    <dbReference type="NCBI Taxonomy" id="192952"/>
    <lineage>
        <taxon>Archaea</taxon>
        <taxon>Methanobacteriati</taxon>
        <taxon>Methanobacteriota</taxon>
        <taxon>Stenosarchaea group</taxon>
        <taxon>Methanomicrobia</taxon>
        <taxon>Methanosarcinales</taxon>
        <taxon>Methanosarcinaceae</taxon>
        <taxon>Methanosarcina</taxon>
    </lineage>
</organism>
<evidence type="ECO:0000255" key="1">
    <source>
        <dbReference type="HAMAP-Rule" id="MF_00320"/>
    </source>
</evidence>
<evidence type="ECO:0000305" key="2"/>
<accession>Q8PV16</accession>
<keyword id="KW-0003">3Fe-4S</keyword>
<keyword id="KW-0963">Cytoplasm</keyword>
<keyword id="KW-0240">DNA-directed RNA polymerase</keyword>
<keyword id="KW-0408">Iron</keyword>
<keyword id="KW-0411">Iron-sulfur</keyword>
<keyword id="KW-0479">Metal-binding</keyword>
<keyword id="KW-0548">Nucleotidyltransferase</keyword>
<keyword id="KW-0804">Transcription</keyword>
<keyword id="KW-0808">Transferase</keyword>
<sequence length="266" mass="28896">MTMEVDILELSDRSAKFVLSRVSMAFANGVRRAMIADVPTLAIEYVNLYDNTSVLYDEQLALRLSLIPLVTDIETYMPQAECEVCGGEGCPACEVSLTLSAEGPGTVYSRDLISSDPKIQPADPNIPIVELKKGQKLVLEAIAHMGYGRDSVKWQAGVACGYKNVPVITIENCDACGHCAAECPKGIIRVEEAGARIAEDDLIKCSLCRLCEQVCDINAIKVDFYENAFVFTMESDGSYTAKDLTINAANVIKGKAEELLAILDQL</sequence>
<protein>
    <recommendedName>
        <fullName evidence="1">DNA-directed RNA polymerase subunit Rpo3</fullName>
        <ecNumber evidence="1">2.7.7.6</ecNumber>
    </recommendedName>
    <alternativeName>
        <fullName evidence="1">DNA-directed RNA polymerase subunit D</fullName>
    </alternativeName>
</protein>
<gene>
    <name evidence="1" type="primary">rpo3</name>
    <name evidence="1" type="synonym">rpoD</name>
    <name type="ordered locus">MM_2158</name>
</gene>